<gene>
    <name evidence="1" type="primary">yejL</name>
    <name type="ordered locus">SSPA0584</name>
</gene>
<accession>B5BE09</accession>
<name>YEJL_SALPK</name>
<reference key="1">
    <citation type="journal article" date="2009" name="BMC Genomics">
        <title>Pseudogene accumulation in the evolutionary histories of Salmonella enterica serovars Paratyphi A and Typhi.</title>
        <authorList>
            <person name="Holt K.E."/>
            <person name="Thomson N.R."/>
            <person name="Wain J."/>
            <person name="Langridge G.C."/>
            <person name="Hasan R."/>
            <person name="Bhutta Z.A."/>
            <person name="Quail M.A."/>
            <person name="Norbertczak H."/>
            <person name="Walker D."/>
            <person name="Simmonds M."/>
            <person name="White B."/>
            <person name="Bason N."/>
            <person name="Mungall K."/>
            <person name="Dougan G."/>
            <person name="Parkhill J."/>
        </authorList>
    </citation>
    <scope>NUCLEOTIDE SEQUENCE [LARGE SCALE GENOMIC DNA]</scope>
    <source>
        <strain>AKU_12601</strain>
    </source>
</reference>
<feature type="chain" id="PRO_1000199599" description="UPF0352 protein YejL">
    <location>
        <begin position="1"/>
        <end position="75"/>
    </location>
</feature>
<dbReference type="EMBL" id="FM200053">
    <property type="protein sequence ID" value="CAR58713.1"/>
    <property type="molecule type" value="Genomic_DNA"/>
</dbReference>
<dbReference type="RefSeq" id="WP_001135904.1">
    <property type="nucleotide sequence ID" value="NC_011147.1"/>
</dbReference>
<dbReference type="SMR" id="B5BE09"/>
<dbReference type="KEGG" id="sek:SSPA0584"/>
<dbReference type="HOGENOM" id="CLU_175457_0_0_6"/>
<dbReference type="Proteomes" id="UP000001869">
    <property type="component" value="Chromosome"/>
</dbReference>
<dbReference type="Gene3D" id="1.10.3390.10">
    <property type="entry name" value="YejL-like"/>
    <property type="match status" value="1"/>
</dbReference>
<dbReference type="HAMAP" id="MF_00816">
    <property type="entry name" value="UPF0352"/>
    <property type="match status" value="1"/>
</dbReference>
<dbReference type="InterPro" id="IPR009857">
    <property type="entry name" value="UPF0352"/>
</dbReference>
<dbReference type="InterPro" id="IPR023202">
    <property type="entry name" value="YejL_sf"/>
</dbReference>
<dbReference type="NCBIfam" id="NF010242">
    <property type="entry name" value="PRK13689.1"/>
    <property type="match status" value="1"/>
</dbReference>
<dbReference type="Pfam" id="PF07208">
    <property type="entry name" value="DUF1414"/>
    <property type="match status" value="1"/>
</dbReference>
<dbReference type="PIRSF" id="PIRSF006188">
    <property type="entry name" value="UCP006188"/>
    <property type="match status" value="1"/>
</dbReference>
<dbReference type="SUPFAM" id="SSF158651">
    <property type="entry name" value="YejL-like"/>
    <property type="match status" value="1"/>
</dbReference>
<protein>
    <recommendedName>
        <fullName evidence="1">UPF0352 protein YejL</fullName>
    </recommendedName>
</protein>
<comment type="similarity">
    <text evidence="1">Belongs to the UPF0352 family.</text>
</comment>
<proteinExistence type="inferred from homology"/>
<organism>
    <name type="scientific">Salmonella paratyphi A (strain AKU_12601)</name>
    <dbReference type="NCBI Taxonomy" id="554290"/>
    <lineage>
        <taxon>Bacteria</taxon>
        <taxon>Pseudomonadati</taxon>
        <taxon>Pseudomonadota</taxon>
        <taxon>Gammaproteobacteria</taxon>
        <taxon>Enterobacterales</taxon>
        <taxon>Enterobacteriaceae</taxon>
        <taxon>Salmonella</taxon>
    </lineage>
</organism>
<evidence type="ECO:0000255" key="1">
    <source>
        <dbReference type="HAMAP-Rule" id="MF_00816"/>
    </source>
</evidence>
<sequence>MPQLSRYSDEHVEQLLSELLSVLEKHKAPTDLSLMVLGNMVTNLINTSVAPAQRQAIANSFARALQSSISEDNAH</sequence>